<evidence type="ECO:0000250" key="1">
    <source>
        <dbReference type="UniProtKB" id="P40344"/>
    </source>
</evidence>
<evidence type="ECO:0000256" key="2">
    <source>
        <dbReference type="SAM" id="MobiDB-lite"/>
    </source>
</evidence>
<evidence type="ECO:0000269" key="3">
    <source>
    </source>
</evidence>
<evidence type="ECO:0000303" key="4">
    <source>
    </source>
</evidence>
<evidence type="ECO:0000305" key="5"/>
<gene>
    <name evidence="4" type="primary">ATG3</name>
    <name type="ORF">KLMA_60454</name>
</gene>
<organism>
    <name type="scientific">Kluyveromyces marxianus (strain DMKU3-1042 / BCC 29191 / NBRC 104275)</name>
    <name type="common">Yeast</name>
    <name type="synonym">Candida kefyr</name>
    <dbReference type="NCBI Taxonomy" id="1003335"/>
    <lineage>
        <taxon>Eukaryota</taxon>
        <taxon>Fungi</taxon>
        <taxon>Dikarya</taxon>
        <taxon>Ascomycota</taxon>
        <taxon>Saccharomycotina</taxon>
        <taxon>Saccharomycetes</taxon>
        <taxon>Saccharomycetales</taxon>
        <taxon>Saccharomycetaceae</taxon>
        <taxon>Kluyveromyces</taxon>
    </lineage>
</organism>
<proteinExistence type="inferred from homology"/>
<comment type="function">
    <text evidence="1 3">E2 conjugating enzyme required for the cytoplasm to vacuole transport (Cvt) and autophagy (PubMed:26442587). Required for selective autophagic degradation of the nucleus (nucleophagy) as well as for mitophagy which contributes to regulate mitochondrial quantity and quality by eliminating the mitochondria to a basal level to fulfill cellular energy requirements and preventing excess ROS production (By similarity). Responsible for the E2-like covalent binding of phosphatidylethanolamine to the C-terminal Gly of ATG8 (By similarity). The ATG12-ATG5 conjugate plays a role of an E3 and promotes the transfer of ATG8 from ATG3 to phosphatidylethanolamine (PE) (By similarity). This step is required for the membrane association of ATG8 (By similarity). The formation of the ATG8-phosphatidylethanolamine conjugate is essential for autophagy and for the cytoplasm to vacuole transport (Cvt) (By similarity). The ATG8-PE conjugate mediates tethering between adjacent membranes and stimulates membrane hemifusion, leading to expansion of the autophagosomal membrane during autophagy (By similarity).</text>
</comment>
<comment type="subunit">
    <text evidence="1">Monomer (By similarity). Interacts with ATG8 through an intermediate thioester bond between Cys-235 and the C-terminal Gly of ATG8 (By similarity). Interacts with the C-terminal region of the E1-like ATG7 enzyme (By similarity). Also interacts with the ATG12-ATG5 conjugate (By similarity).</text>
</comment>
<comment type="subcellular location">
    <subcellularLocation>
        <location evidence="1">Cytoplasm</location>
    </subcellularLocation>
</comment>
<comment type="domain">
    <text evidence="1">The N-terminal region is involved in phosphatidylethanolamine-binding and is required for ATG8-PE conjugation (By similarity).</text>
</comment>
<comment type="domain">
    <text evidence="1">The flexible region (FR) is required for ATG7-binding (By similarity).</text>
</comment>
<comment type="domain">
    <text evidence="1">The handle region (HR) contains the ATG8 interaction motif (AIM) and mediates binding to ATG8 (By similarity). It is crucial for the cytoplasm-to-vacuole targeting pathway (By similarity).</text>
</comment>
<comment type="disruption phenotype">
    <text evidence="3">Impairs the formation of preautophagosomal structures (PubMed:26442587).</text>
</comment>
<comment type="miscellaneous">
    <text evidence="3">Kluyveromyces marxianus proteins are shorter in length and have a more ordered secondary structure than their S.cerevisiae counterparts, which might contribute to the superior thermotolerance and solubility (PubMed:26442587). K.marxianus could be therefore useful as a new model organism for further elucidation of the molecular details of autophagy (PubMed:26442587).</text>
</comment>
<comment type="similarity">
    <text evidence="5">Belongs to the ATG3 family.</text>
</comment>
<reference key="1">
    <citation type="journal article" date="2015" name="Biotechnol. Biofuels">
        <title>Genetic basis of the highly efficient yeast Kluyveromyces marxianus: complete genome sequence and transcriptome analyses.</title>
        <authorList>
            <person name="Lertwattanasakul N."/>
            <person name="Kosaka T."/>
            <person name="Hosoyama A."/>
            <person name="Suzuki Y."/>
            <person name="Rodrussamee N."/>
            <person name="Matsutani M."/>
            <person name="Murata M."/>
            <person name="Fujimoto N."/>
            <person name="Suprayogi X."/>
            <person name="Tsuchikane K."/>
            <person name="Limtong S."/>
            <person name="Fujita N."/>
            <person name="Yamada M."/>
        </authorList>
    </citation>
    <scope>NUCLEOTIDE SEQUENCE [LARGE SCALE GENOMIC DNA]</scope>
    <source>
        <strain>DMKU3-1042 / BCC 29191 / NBRC 104275</strain>
    </source>
</reference>
<reference key="2">
    <citation type="journal article" date="2015" name="J. Biol. Chem.">
        <title>The thermotolerant yeast Kluyveromyces marxianus is a useful organism for structural and biochemical studies of autophagy.</title>
        <authorList>
            <person name="Yamamoto H."/>
            <person name="Shima T."/>
            <person name="Yamaguchi M."/>
            <person name="Mochizuki Y."/>
            <person name="Hoshida H."/>
            <person name="Kakuta S."/>
            <person name="Kondo-Kakuta C."/>
            <person name="Noda N.N."/>
            <person name="Inagaki F."/>
            <person name="Itoh T."/>
            <person name="Akada R."/>
            <person name="Ohsumi Y."/>
        </authorList>
    </citation>
    <scope>IDENTIFICATION</scope>
    <scope>FUNCTION</scope>
    <scope>DISRUPTION PHENOTYPE</scope>
</reference>
<feature type="chain" id="PRO_0000443871" description="Autophagy-related protein 3">
    <location>
        <begin position="1"/>
        <end position="308"/>
    </location>
</feature>
<feature type="region of interest" description="Flexible region" evidence="1">
    <location>
        <begin position="83"/>
        <end position="159"/>
    </location>
</feature>
<feature type="region of interest" description="Disordered" evidence="2">
    <location>
        <begin position="89"/>
        <end position="121"/>
    </location>
</feature>
<feature type="region of interest" description="Handle region" evidence="1">
    <location>
        <begin position="239"/>
        <end position="283"/>
    </location>
</feature>
<feature type="compositionally biased region" description="Basic and acidic residues" evidence="2">
    <location>
        <begin position="106"/>
        <end position="120"/>
    </location>
</feature>
<feature type="active site" description="Glycyl thioester intermediate" evidence="1">
    <location>
        <position position="235"/>
    </location>
</feature>
<protein>
    <recommendedName>
        <fullName evidence="4">Autophagy-related protein 3</fullName>
    </recommendedName>
    <alternativeName>
        <fullName evidence="4">Autophagy-related E2-like conjugation enzyme atg3</fullName>
    </alternativeName>
</protein>
<keyword id="KW-0072">Autophagy</keyword>
<keyword id="KW-0963">Cytoplasm</keyword>
<keyword id="KW-0653">Protein transport</keyword>
<keyword id="KW-0813">Transport</keyword>
<keyword id="KW-0833">Ubl conjugation pathway</keyword>
<accession>W0TEF9</accession>
<name>ATG3_KLUMD</name>
<sequence>MLRSTLSNWREYLTPITHTSTFETTGQLTPEEFVKAGDYLVHMFPTWRWNGTDYNNVSYKDFLPKEKQFLITRKVPCKLRASNFVETQTTETRDVGDGWELEGQSEGERESGREDTKSNEEALASNIEDLQIVDDDESEGGGDEEQLLQNELADDDDDIVDIKPSTLRYYDLYITYSTSYRVPKMYLCGFANEGTPLSPDQMFEDIAPDYRSKTATIEPLPFFKGNQISVSIHPCKHANVMKVLMEKVRASRHRARDTEAQKNAEEDWEDLQSDIDDGLRVDQYLVVFLKFITSVTPGIEHDYTMEGW</sequence>
<dbReference type="EMBL" id="AP012218">
    <property type="protein sequence ID" value="BAO41745.1"/>
    <property type="molecule type" value="Genomic_DNA"/>
</dbReference>
<dbReference type="RefSeq" id="XP_022677525.1">
    <property type="nucleotide sequence ID" value="XM_022821131.1"/>
</dbReference>
<dbReference type="SMR" id="W0TEF9"/>
<dbReference type="GeneID" id="34717668"/>
<dbReference type="VEuPathDB" id="FungiDB:KLMA_60454"/>
<dbReference type="OrthoDB" id="1584384at2759"/>
<dbReference type="Proteomes" id="UP000065495">
    <property type="component" value="Chromosome 6"/>
</dbReference>
<dbReference type="GO" id="GO:0005829">
    <property type="term" value="C:cytosol"/>
    <property type="evidence" value="ECO:0007669"/>
    <property type="project" value="TreeGrafter"/>
</dbReference>
<dbReference type="GO" id="GO:0000407">
    <property type="term" value="C:phagophore assembly site"/>
    <property type="evidence" value="ECO:0007669"/>
    <property type="project" value="TreeGrafter"/>
</dbReference>
<dbReference type="GO" id="GO:0019776">
    <property type="term" value="F:Atg8-family ligase activity"/>
    <property type="evidence" value="ECO:0007669"/>
    <property type="project" value="TreeGrafter"/>
</dbReference>
<dbReference type="GO" id="GO:0000045">
    <property type="term" value="P:autophagosome assembly"/>
    <property type="evidence" value="ECO:0007669"/>
    <property type="project" value="TreeGrafter"/>
</dbReference>
<dbReference type="GO" id="GO:0000422">
    <property type="term" value="P:autophagy of mitochondrion"/>
    <property type="evidence" value="ECO:0007669"/>
    <property type="project" value="TreeGrafter"/>
</dbReference>
<dbReference type="GO" id="GO:0061723">
    <property type="term" value="P:glycophagy"/>
    <property type="evidence" value="ECO:0007669"/>
    <property type="project" value="TreeGrafter"/>
</dbReference>
<dbReference type="GO" id="GO:0044804">
    <property type="term" value="P:nucleophagy"/>
    <property type="evidence" value="ECO:0007669"/>
    <property type="project" value="TreeGrafter"/>
</dbReference>
<dbReference type="GO" id="GO:0015031">
    <property type="term" value="P:protein transport"/>
    <property type="evidence" value="ECO:0007669"/>
    <property type="project" value="UniProtKB-KW"/>
</dbReference>
<dbReference type="Gene3D" id="3.30.1460.50">
    <property type="match status" value="1"/>
</dbReference>
<dbReference type="InterPro" id="IPR007135">
    <property type="entry name" value="Atg3/Atg10"/>
</dbReference>
<dbReference type="PANTHER" id="PTHR12866">
    <property type="entry name" value="UBIQUITIN-LIKE-CONJUGATING ENZYME ATG3"/>
    <property type="match status" value="1"/>
</dbReference>
<dbReference type="PANTHER" id="PTHR12866:SF2">
    <property type="entry name" value="UBIQUITIN-LIKE-CONJUGATING ENZYME ATG3"/>
    <property type="match status" value="1"/>
</dbReference>
<dbReference type="Pfam" id="PF03987">
    <property type="entry name" value="Autophagy_act_C"/>
    <property type="match status" value="1"/>
</dbReference>